<name>FYN_PIG</name>
<proteinExistence type="evidence at transcript level"/>
<comment type="function">
    <text evidence="2 4">Non-receptor tyrosine-protein kinase that plays a role in many biological processes including regulation of cell growth and survival, cell adhesion, integrin-mediated signaling, cytoskeletal remodeling, cell motility, immune response and axon guidance. Inactive FYN is phosphorylated on its C-terminal tail within the catalytic domain. Following activation by PKA, the protein subsequently associates with PTK2/FAK1, allowing PTK2/FAK1 phosphorylation, activation and targeting to focal adhesions. Involved in the regulation of cell adhesion and motility through phosphorylation of CTNNB1 (beta-catenin) and CTNND1 (delta-catenin). Regulates cytoskeletal remodeling by phosphorylating several proteins including the actin regulator WAS and the microtubule-associated proteins MAP2 and MAPT. Promotes cell survival by phosphorylating AGAP2/PIKE-A and preventing its apoptotic cleavage. Participates in signal transduction pathways that regulate the integrity of the glomerular slit diaphragm (an essential part of the glomerular filter of the kidney) by phosphorylating several slit diaphragm components including NPHS1, KIRREL1 and TRPC6. Plays a role in neural processes by phosphorylating DPYSL2, a multifunctional adapter protein within the central nervous system, ARHGAP32, a regulator for Rho family GTPases implicated in various neural functions, and SNCA, a small pre-synaptic protein (By similarity). Involved in reelin signaling by mediating phosphorylation of DAB1 following reelin (RELN)-binding to its receptor (By similarity). Participates in the downstream signaling pathways that lead to T-cell differentiation and proliferation following T-cell receptor (TCR) stimulation. Phosphorylates PTK2B/PYK2 in response to T-cell receptor activation. Also participates in negative feedback regulation of TCR signaling through phosphorylation of PAG1, thereby promoting interaction between PAG1 and CSK and recruitment of CSK to lipid rafts (By similarity). CSK maintains LCK and FYN in an inactive form (By similarity). Promotes CD28-induced phosphorylation of VAV1 (By similarity). In mast cells, phosphorylates CLNK after activation of immunoglobulin epsilon receptor signaling (By similarity). Can also promote CD244-mediated NK cell activation (By similarity).</text>
</comment>
<comment type="catalytic activity">
    <reaction evidence="2 9">
        <text>L-tyrosyl-[protein] + ATP = O-phospho-L-tyrosyl-[protein] + ADP + H(+)</text>
        <dbReference type="Rhea" id="RHEA:10596"/>
        <dbReference type="Rhea" id="RHEA-COMP:10136"/>
        <dbReference type="Rhea" id="RHEA-COMP:20101"/>
        <dbReference type="ChEBI" id="CHEBI:15378"/>
        <dbReference type="ChEBI" id="CHEBI:30616"/>
        <dbReference type="ChEBI" id="CHEBI:46858"/>
        <dbReference type="ChEBI" id="CHEBI:61978"/>
        <dbReference type="ChEBI" id="CHEBI:456216"/>
        <dbReference type="EC" id="2.7.10.2"/>
    </reaction>
</comment>
<comment type="cofactor">
    <cofactor evidence="2">
        <name>Mn(2+)</name>
        <dbReference type="ChEBI" id="CHEBI:29035"/>
    </cofactor>
</comment>
<comment type="activity regulation">
    <text evidence="1">Inhibited by phosphorylation of Tyr-531 by leukocyte common antigen and activated by dephosphorylation of this site.</text>
</comment>
<comment type="subunit">
    <text evidence="2 4 5">Interacts (via its SH3 domain) with PIK3R1 and PRMT8. Interacts with FYB1, PAG1, and SH2D1A. Interacts with CD79A (tyrosine-phosphorylated form); the interaction increases FYN activity. Interacts (via SH2 domain) with CSF1R (tyrosine phosphorylated) (By similarity). Interacts with TOM1L1 (phosphorylated form). Interacts with KDR (tyrosine phosphorylated). Interacts (via SH3 domain) with KLHL2 (via N-terminus) (By similarity). Interacts with SH2D1A and SLAMF1. Interacts with ITCH; the interaction phosphorylates ITCH and negatively regulates its activity. Interacts with FASLG. Interacts with RUNX3. Interacts with KIT. Interacts with EPHA8; possible downstream effector of EPHA8 in regulation of cell adhesion. Interacts with PTK2/FAK1; this interaction leads to PTK2/FAK1 phosphorylation and activation. Interacts with CAV1; this interaction couples integrins to the Ras-ERK pathway. Interacts with UNC119. Interacts (via SH2 domain) with PTPRH (phosphorylated form) (By similarity). Interacts with PTPRO (phosphorylated form) (By similarity). Interacts with PTPRB (phosphorylated form) (By similarity). Interacts with FYB2 (By similarity). Interacts with DSCAM (By similarity). Interacts with SKAP1 and FYB1; this interaction promotes the phosphorylation of CLNK (By similarity). Interacts with NEDD9; in the presence of PTK2 (By similarity).</text>
</comment>
<comment type="subcellular location">
    <subcellularLocation>
        <location evidence="2">Cytoplasm</location>
    </subcellularLocation>
    <subcellularLocation>
        <location evidence="2">Nucleus</location>
    </subcellularLocation>
    <subcellularLocation>
        <location evidence="2">Cell membrane</location>
    </subcellularLocation>
    <subcellularLocation>
        <location evidence="5">Perikaryon</location>
    </subcellularLocation>
    <text evidence="2">Present and active in lipid rafts (By similarity). Palmitoylation is crucial for proper trafficking (By similarity).</text>
</comment>
<comment type="PTM">
    <text evidence="2 4">Autophosphorylated at Tyr-420 (By similarity). Phosphorylation on the C-terminal tail at Tyr-531 by CSK maintains the enzyme in an inactive state. PTPRC/CD45 dephosphorylates Tyr-531 leading to activation. Ultraviolet B (UVB) strongly increase phosphorylation at Thr-12 and kinase activity, and promotes translocation from the cytoplasm to the nucleus. Dephosphorylation at Tyr-420 by PTPN2 negatively regulates T-cell receptor signaling (By similarity). Phosphorylated at tyrosine residues, which can be enhanced by NTN1 (By similarity).</text>
</comment>
<comment type="PTM">
    <text evidence="4">Palmitoylated. Palmitoylation at Cys-3 and Cys-6, probably by ZDHHC21, regulates subcellular location.</text>
</comment>
<comment type="similarity">
    <text evidence="6">Belongs to the protein kinase superfamily. Tyr protein kinase family. SRC subfamily.</text>
</comment>
<protein>
    <recommendedName>
        <fullName>Tyrosine-protein kinase Fyn</fullName>
        <ecNumber>2.7.10.2</ecNumber>
    </recommendedName>
    <alternativeName>
        <fullName>Proto-oncogene c-Fyn</fullName>
    </alternativeName>
    <alternativeName>
        <fullName>p59-Fyn</fullName>
    </alternativeName>
</protein>
<reference evidence="10" key="1">
    <citation type="submission" date="2007-01" db="EMBL/GenBank/DDBJ databases">
        <title>Cloning and expression of porcine FYN gene.</title>
        <authorList>
            <person name="Long H."/>
            <person name="Yang Z."/>
        </authorList>
    </citation>
    <scope>NUCLEOTIDE SEQUENCE [MRNA]</scope>
</reference>
<dbReference type="EC" id="2.7.10.2"/>
<dbReference type="EMBL" id="DQ836055">
    <property type="protein sequence ID" value="ABI33874.2"/>
    <property type="molecule type" value="mRNA"/>
</dbReference>
<dbReference type="RefSeq" id="NP_001073675.2">
    <property type="nucleotide sequence ID" value="NM_001080206.2"/>
</dbReference>
<dbReference type="RefSeq" id="XP_020940006.1">
    <property type="nucleotide sequence ID" value="XM_021084347.1"/>
</dbReference>
<dbReference type="RefSeq" id="XP_020940009.1">
    <property type="nucleotide sequence ID" value="XM_021084350.1"/>
</dbReference>
<dbReference type="RefSeq" id="XP_020940020.1">
    <property type="nucleotide sequence ID" value="XM_021084361.1"/>
</dbReference>
<dbReference type="BMRB" id="A1Y2K1"/>
<dbReference type="SMR" id="A1Y2K1"/>
<dbReference type="FunCoup" id="A1Y2K1">
    <property type="interactions" value="601"/>
</dbReference>
<dbReference type="STRING" id="9823.ENSSSCP00000004770"/>
<dbReference type="PaxDb" id="9823-ENSSSCP00000004769"/>
<dbReference type="PeptideAtlas" id="A1Y2K1"/>
<dbReference type="Ensembl" id="ENSSSCT00000004885.5">
    <property type="protein sequence ID" value="ENSSSCP00000004770.3"/>
    <property type="gene ID" value="ENSSSCG00000004421.6"/>
</dbReference>
<dbReference type="Ensembl" id="ENSSSCT00015005647.1">
    <property type="protein sequence ID" value="ENSSSCP00015002255.1"/>
    <property type="gene ID" value="ENSSSCG00015004193.1"/>
</dbReference>
<dbReference type="Ensembl" id="ENSSSCT00025105476.1">
    <property type="protein sequence ID" value="ENSSSCP00025047147.1"/>
    <property type="gene ID" value="ENSSSCG00025076167.1"/>
</dbReference>
<dbReference type="Ensembl" id="ENSSSCT00030023971.1">
    <property type="protein sequence ID" value="ENSSSCP00030010751.1"/>
    <property type="gene ID" value="ENSSSCG00030017334.1"/>
</dbReference>
<dbReference type="Ensembl" id="ENSSSCT00035017115.1">
    <property type="protein sequence ID" value="ENSSSCP00035005918.1"/>
    <property type="gene ID" value="ENSSSCG00035013553.1"/>
</dbReference>
<dbReference type="Ensembl" id="ENSSSCT00040047800.1">
    <property type="protein sequence ID" value="ENSSSCP00040019985.1"/>
    <property type="gene ID" value="ENSSSCG00040035579.1"/>
</dbReference>
<dbReference type="Ensembl" id="ENSSSCT00045015524.1">
    <property type="protein sequence ID" value="ENSSSCP00045010776.1"/>
    <property type="gene ID" value="ENSSSCG00045009058.1"/>
</dbReference>
<dbReference type="Ensembl" id="ENSSSCT00050052843.1">
    <property type="protein sequence ID" value="ENSSSCP00050022187.1"/>
    <property type="gene ID" value="ENSSSCG00050039163.1"/>
</dbReference>
<dbReference type="Ensembl" id="ENSSSCT00055043457.1">
    <property type="protein sequence ID" value="ENSSSCP00055034584.1"/>
    <property type="gene ID" value="ENSSSCG00055022140.1"/>
</dbReference>
<dbReference type="Ensembl" id="ENSSSCT00060045861.1">
    <property type="protein sequence ID" value="ENSSSCP00060019642.1"/>
    <property type="gene ID" value="ENSSSCG00060033808.1"/>
</dbReference>
<dbReference type="Ensembl" id="ENSSSCT00065058364.1">
    <property type="protein sequence ID" value="ENSSSCP00065025297.1"/>
    <property type="gene ID" value="ENSSSCG00065042691.1"/>
</dbReference>
<dbReference type="Ensembl" id="ENSSSCT00070045040.1">
    <property type="protein sequence ID" value="ENSSSCP00070037941.1"/>
    <property type="gene ID" value="ENSSSCG00070022660.1"/>
</dbReference>
<dbReference type="Ensembl" id="ENSSSCT00070045057.1">
    <property type="protein sequence ID" value="ENSSSCP00070037958.1"/>
    <property type="gene ID" value="ENSSSCG00070022660.1"/>
</dbReference>
<dbReference type="Ensembl" id="ENSSSCT00070045062.1">
    <property type="protein sequence ID" value="ENSSSCP00070037962.1"/>
    <property type="gene ID" value="ENSSSCG00070022660.1"/>
</dbReference>
<dbReference type="Ensembl" id="ENSSSCT00090054867">
    <property type="protein sequence ID" value="ENSSSCP00090034083"/>
    <property type="gene ID" value="ENSSSCG00090031034"/>
</dbReference>
<dbReference type="Ensembl" id="ENSSSCT00105065968">
    <property type="protein sequence ID" value="ENSSSCP00105046955"/>
    <property type="gene ID" value="ENSSSCG00105034548"/>
</dbReference>
<dbReference type="Ensembl" id="ENSSSCT00110005086">
    <property type="protein sequence ID" value="ENSSSCP00110003840"/>
    <property type="gene ID" value="ENSSSCG00110002490"/>
</dbReference>
<dbReference type="Ensembl" id="ENSSSCT00115000444">
    <property type="protein sequence ID" value="ENSSSCP00115000392"/>
    <property type="gene ID" value="ENSSSCG00115000323"/>
</dbReference>
<dbReference type="Ensembl" id="ENSSSCT00130051945">
    <property type="protein sequence ID" value="ENSSSCP00130036900"/>
    <property type="gene ID" value="ENSSSCG00130026734"/>
</dbReference>
<dbReference type="GeneID" id="791125"/>
<dbReference type="KEGG" id="ssc:791125"/>
<dbReference type="CTD" id="2534"/>
<dbReference type="VGNC" id="VGNC:88276">
    <property type="gene designation" value="FYN"/>
</dbReference>
<dbReference type="eggNOG" id="KOG0197">
    <property type="taxonomic scope" value="Eukaryota"/>
</dbReference>
<dbReference type="GeneTree" id="ENSGT00940000155462"/>
<dbReference type="InParanoid" id="A1Y2K1"/>
<dbReference type="OMA" id="XWYFGKL"/>
<dbReference type="OrthoDB" id="4062651at2759"/>
<dbReference type="TreeFam" id="TF351634"/>
<dbReference type="Reactome" id="R-SSC-114604">
    <property type="pathway name" value="GPVI-mediated activation cascade"/>
</dbReference>
<dbReference type="Reactome" id="R-SSC-1227986">
    <property type="pathway name" value="Signaling by ERBB2"/>
</dbReference>
<dbReference type="Reactome" id="R-SSC-1257604">
    <property type="pathway name" value="PIP3 activates AKT signaling"/>
</dbReference>
<dbReference type="Reactome" id="R-SSC-1433557">
    <property type="pathway name" value="Signaling by SCF-KIT"/>
</dbReference>
<dbReference type="Reactome" id="R-SSC-1433559">
    <property type="pathway name" value="Regulation of KIT signaling"/>
</dbReference>
<dbReference type="Reactome" id="R-SSC-202733">
    <property type="pathway name" value="Cell surface interactions at the vascular wall"/>
</dbReference>
<dbReference type="Reactome" id="R-SSC-2029481">
    <property type="pathway name" value="FCGR activation"/>
</dbReference>
<dbReference type="Reactome" id="R-SSC-210990">
    <property type="pathway name" value="PECAM1 interactions"/>
</dbReference>
<dbReference type="Reactome" id="R-SSC-2424491">
    <property type="pathway name" value="DAP12 signaling"/>
</dbReference>
<dbReference type="Reactome" id="R-SSC-373753">
    <property type="pathway name" value="Nephrin family interactions"/>
</dbReference>
<dbReference type="Reactome" id="R-SSC-375165">
    <property type="pathway name" value="NCAM signaling for neurite out-growth"/>
</dbReference>
<dbReference type="Reactome" id="R-SSC-389356">
    <property type="pathway name" value="Co-stimulation by CD28"/>
</dbReference>
<dbReference type="Reactome" id="R-SSC-389357">
    <property type="pathway name" value="CD28 dependent PI3K/Akt signaling"/>
</dbReference>
<dbReference type="Reactome" id="R-SSC-389359">
    <property type="pathway name" value="CD28 dependent Vav1 pathway"/>
</dbReference>
<dbReference type="Reactome" id="R-SSC-389513">
    <property type="pathway name" value="Co-inhibition by CTLA4"/>
</dbReference>
<dbReference type="Reactome" id="R-SSC-3928662">
    <property type="pathway name" value="EPHB-mediated forward signaling"/>
</dbReference>
<dbReference type="Reactome" id="R-SSC-3928663">
    <property type="pathway name" value="EPHA-mediated growth cone collapse"/>
</dbReference>
<dbReference type="Reactome" id="R-SSC-3928664">
    <property type="pathway name" value="Ephrin signaling"/>
</dbReference>
<dbReference type="Reactome" id="R-SSC-3928665">
    <property type="pathway name" value="EPH-ephrin mediated repulsion of cells"/>
</dbReference>
<dbReference type="Reactome" id="R-SSC-399954">
    <property type="pathway name" value="Sema3A PAK dependent Axon repulsion"/>
</dbReference>
<dbReference type="Reactome" id="R-SSC-399955">
    <property type="pathway name" value="SEMA3A-Plexin repulsion signaling by inhibiting Integrin adhesion"/>
</dbReference>
<dbReference type="Reactome" id="R-SSC-399956">
    <property type="pathway name" value="CRMPs in Sema3A signaling"/>
</dbReference>
<dbReference type="Reactome" id="R-SSC-4420097">
    <property type="pathway name" value="VEGFA-VEGFR2 Pathway"/>
</dbReference>
<dbReference type="Reactome" id="R-SSC-5621480">
    <property type="pathway name" value="Dectin-2 family"/>
</dbReference>
<dbReference type="Reactome" id="R-SSC-5673001">
    <property type="pathway name" value="RAF/MAP kinase cascade"/>
</dbReference>
<dbReference type="Reactome" id="R-SSC-6811558">
    <property type="pathway name" value="PI5P, PP2A and IER3 Regulate PI3K/AKT Signaling"/>
</dbReference>
<dbReference type="Reactome" id="R-SSC-75892">
    <property type="pathway name" value="Platelet Adhesion to exposed collagen"/>
</dbReference>
<dbReference type="Reactome" id="R-SSC-8866376">
    <property type="pathway name" value="Reelin signalling pathway"/>
</dbReference>
<dbReference type="Reactome" id="R-SSC-9032759">
    <property type="pathway name" value="NTRK2 activates RAC1"/>
</dbReference>
<dbReference type="Reactome" id="R-SSC-912631">
    <property type="pathway name" value="Regulation of signaling by CBL"/>
</dbReference>
<dbReference type="Proteomes" id="UP000008227">
    <property type="component" value="Chromosome 1"/>
</dbReference>
<dbReference type="Proteomes" id="UP000314985">
    <property type="component" value="Chromosome 1"/>
</dbReference>
<dbReference type="Proteomes" id="UP000694570">
    <property type="component" value="Unplaced"/>
</dbReference>
<dbReference type="Proteomes" id="UP000694571">
    <property type="component" value="Unplaced"/>
</dbReference>
<dbReference type="Proteomes" id="UP000694720">
    <property type="component" value="Unplaced"/>
</dbReference>
<dbReference type="Proteomes" id="UP000694722">
    <property type="component" value="Unplaced"/>
</dbReference>
<dbReference type="Proteomes" id="UP000694723">
    <property type="component" value="Unplaced"/>
</dbReference>
<dbReference type="Proteomes" id="UP000694724">
    <property type="component" value="Unplaced"/>
</dbReference>
<dbReference type="Proteomes" id="UP000694725">
    <property type="component" value="Unplaced"/>
</dbReference>
<dbReference type="Proteomes" id="UP000694726">
    <property type="component" value="Unplaced"/>
</dbReference>
<dbReference type="Proteomes" id="UP000694727">
    <property type="component" value="Unplaced"/>
</dbReference>
<dbReference type="Proteomes" id="UP000694728">
    <property type="component" value="Unplaced"/>
</dbReference>
<dbReference type="Bgee" id="ENSSSCG00000004421">
    <property type="expression patterns" value="Expressed in oocyte and 40 other cell types or tissues"/>
</dbReference>
<dbReference type="ExpressionAtlas" id="A1Y2K1">
    <property type="expression patterns" value="baseline and differential"/>
</dbReference>
<dbReference type="GO" id="GO:0005884">
    <property type="term" value="C:actin filament"/>
    <property type="evidence" value="ECO:0007669"/>
    <property type="project" value="Ensembl"/>
</dbReference>
<dbReference type="GO" id="GO:0005829">
    <property type="term" value="C:cytosol"/>
    <property type="evidence" value="ECO:0007669"/>
    <property type="project" value="Ensembl"/>
</dbReference>
<dbReference type="GO" id="GO:0030425">
    <property type="term" value="C:dendrite"/>
    <property type="evidence" value="ECO:0007669"/>
    <property type="project" value="Ensembl"/>
</dbReference>
<dbReference type="GO" id="GO:0005768">
    <property type="term" value="C:endosome"/>
    <property type="evidence" value="ECO:0007669"/>
    <property type="project" value="Ensembl"/>
</dbReference>
<dbReference type="GO" id="GO:0097386">
    <property type="term" value="C:glial cell projection"/>
    <property type="evidence" value="ECO:0007669"/>
    <property type="project" value="Ensembl"/>
</dbReference>
<dbReference type="GO" id="GO:0045121">
    <property type="term" value="C:membrane raft"/>
    <property type="evidence" value="ECO:0007669"/>
    <property type="project" value="Ensembl"/>
</dbReference>
<dbReference type="GO" id="GO:0005634">
    <property type="term" value="C:nucleus"/>
    <property type="evidence" value="ECO:0007669"/>
    <property type="project" value="UniProtKB-SubCell"/>
</dbReference>
<dbReference type="GO" id="GO:0043204">
    <property type="term" value="C:perikaryon"/>
    <property type="evidence" value="ECO:0007669"/>
    <property type="project" value="UniProtKB-SubCell"/>
</dbReference>
<dbReference type="GO" id="GO:0005886">
    <property type="term" value="C:plasma membrane"/>
    <property type="evidence" value="ECO:0000318"/>
    <property type="project" value="GO_Central"/>
</dbReference>
<dbReference type="GO" id="GO:0014069">
    <property type="term" value="C:postsynaptic density"/>
    <property type="evidence" value="ECO:0007669"/>
    <property type="project" value="Ensembl"/>
</dbReference>
<dbReference type="GO" id="GO:0098685">
    <property type="term" value="C:Schaffer collateral - CA1 synapse"/>
    <property type="evidence" value="ECO:0007669"/>
    <property type="project" value="Ensembl"/>
</dbReference>
<dbReference type="GO" id="GO:0043014">
    <property type="term" value="F:alpha-tubulin binding"/>
    <property type="evidence" value="ECO:0007669"/>
    <property type="project" value="Ensembl"/>
</dbReference>
<dbReference type="GO" id="GO:0005524">
    <property type="term" value="F:ATP binding"/>
    <property type="evidence" value="ECO:0007669"/>
    <property type="project" value="UniProtKB-KW"/>
</dbReference>
<dbReference type="GO" id="GO:0097718">
    <property type="term" value="F:disordered domain specific binding"/>
    <property type="evidence" value="ECO:0007669"/>
    <property type="project" value="Ensembl"/>
</dbReference>
<dbReference type="GO" id="GO:0046875">
    <property type="term" value="F:ephrin receptor binding"/>
    <property type="evidence" value="ECO:0007669"/>
    <property type="project" value="Ensembl"/>
</dbReference>
<dbReference type="GO" id="GO:0001664">
    <property type="term" value="F:G protein-coupled receptor binding"/>
    <property type="evidence" value="ECO:0007669"/>
    <property type="project" value="Ensembl"/>
</dbReference>
<dbReference type="GO" id="GO:0070851">
    <property type="term" value="F:growth factor receptor binding"/>
    <property type="evidence" value="ECO:0007669"/>
    <property type="project" value="Ensembl"/>
</dbReference>
<dbReference type="GO" id="GO:0042802">
    <property type="term" value="F:identical protein binding"/>
    <property type="evidence" value="ECO:0007669"/>
    <property type="project" value="Ensembl"/>
</dbReference>
<dbReference type="GO" id="GO:0046872">
    <property type="term" value="F:metal ion binding"/>
    <property type="evidence" value="ECO:0007669"/>
    <property type="project" value="UniProtKB-KW"/>
</dbReference>
<dbReference type="GO" id="GO:0004715">
    <property type="term" value="F:non-membrane spanning protein tyrosine kinase activity"/>
    <property type="evidence" value="ECO:0000318"/>
    <property type="project" value="GO_Central"/>
</dbReference>
<dbReference type="GO" id="GO:0016004">
    <property type="term" value="F:phospholipase activator activity"/>
    <property type="evidence" value="ECO:0007669"/>
    <property type="project" value="Ensembl"/>
</dbReference>
<dbReference type="GO" id="GO:0043274">
    <property type="term" value="F:phospholipase binding"/>
    <property type="evidence" value="ECO:0007669"/>
    <property type="project" value="Ensembl"/>
</dbReference>
<dbReference type="GO" id="GO:0004713">
    <property type="term" value="F:protein tyrosine kinase activity"/>
    <property type="evidence" value="ECO:0000250"/>
    <property type="project" value="UniProtKB"/>
</dbReference>
<dbReference type="GO" id="GO:0097110">
    <property type="term" value="F:scaffold protein binding"/>
    <property type="evidence" value="ECO:0007669"/>
    <property type="project" value="Ensembl"/>
</dbReference>
<dbReference type="GO" id="GO:0005102">
    <property type="term" value="F:signaling receptor binding"/>
    <property type="evidence" value="ECO:0000318"/>
    <property type="project" value="GO_Central"/>
</dbReference>
<dbReference type="GO" id="GO:0048156">
    <property type="term" value="F:tau protein binding"/>
    <property type="evidence" value="ECO:0007669"/>
    <property type="project" value="Ensembl"/>
</dbReference>
<dbReference type="GO" id="GO:0044325">
    <property type="term" value="F:transmembrane transporter binding"/>
    <property type="evidence" value="ECO:0007669"/>
    <property type="project" value="Ensembl"/>
</dbReference>
<dbReference type="GO" id="GO:0050798">
    <property type="term" value="P:activated T cell proliferation"/>
    <property type="evidence" value="ECO:0007669"/>
    <property type="project" value="Ensembl"/>
</dbReference>
<dbReference type="GO" id="GO:0002250">
    <property type="term" value="P:adaptive immune response"/>
    <property type="evidence" value="ECO:0007669"/>
    <property type="project" value="UniProtKB-KW"/>
</dbReference>
<dbReference type="GO" id="GO:0030154">
    <property type="term" value="P:cell differentiation"/>
    <property type="evidence" value="ECO:0000318"/>
    <property type="project" value="GO_Central"/>
</dbReference>
<dbReference type="GO" id="GO:0007169">
    <property type="term" value="P:cell surface receptor protein tyrosine kinase signaling pathway"/>
    <property type="evidence" value="ECO:0000318"/>
    <property type="project" value="GO_Central"/>
</dbReference>
<dbReference type="GO" id="GO:1904646">
    <property type="term" value="P:cellular response to amyloid-beta"/>
    <property type="evidence" value="ECO:0007669"/>
    <property type="project" value="Ensembl"/>
</dbReference>
<dbReference type="GO" id="GO:0036120">
    <property type="term" value="P:cellular response to platelet-derived growth factor stimulus"/>
    <property type="evidence" value="ECO:0007669"/>
    <property type="project" value="Ensembl"/>
</dbReference>
<dbReference type="GO" id="GO:0071560">
    <property type="term" value="P:cellular response to transforming growth factor beta stimulus"/>
    <property type="evidence" value="ECO:0007669"/>
    <property type="project" value="Ensembl"/>
</dbReference>
<dbReference type="GO" id="GO:0048813">
    <property type="term" value="P:dendrite morphogenesis"/>
    <property type="evidence" value="ECO:0007669"/>
    <property type="project" value="Ensembl"/>
</dbReference>
<dbReference type="GO" id="GO:0050966">
    <property type="term" value="P:detection of mechanical stimulus involved in sensory perception of pain"/>
    <property type="evidence" value="ECO:0007669"/>
    <property type="project" value="Ensembl"/>
</dbReference>
<dbReference type="GO" id="GO:0030900">
    <property type="term" value="P:forebrain development"/>
    <property type="evidence" value="ECO:0007669"/>
    <property type="project" value="Ensembl"/>
</dbReference>
<dbReference type="GO" id="GO:0007216">
    <property type="term" value="P:G protein-coupled glutamate receptor signaling pathway"/>
    <property type="evidence" value="ECO:0007669"/>
    <property type="project" value="Ensembl"/>
</dbReference>
<dbReference type="GO" id="GO:0010467">
    <property type="term" value="P:gene expression"/>
    <property type="evidence" value="ECO:0007669"/>
    <property type="project" value="Ensembl"/>
</dbReference>
<dbReference type="GO" id="GO:0003015">
    <property type="term" value="P:heart process"/>
    <property type="evidence" value="ECO:0007669"/>
    <property type="project" value="Ensembl"/>
</dbReference>
<dbReference type="GO" id="GO:0035556">
    <property type="term" value="P:intracellular signal transduction"/>
    <property type="evidence" value="ECO:0007669"/>
    <property type="project" value="Ensembl"/>
</dbReference>
<dbReference type="GO" id="GO:0050804">
    <property type="term" value="P:modulation of chemical synaptic transmission"/>
    <property type="evidence" value="ECO:0007669"/>
    <property type="project" value="Ensembl"/>
</dbReference>
<dbReference type="GO" id="GO:0030101">
    <property type="term" value="P:natural killer cell activation"/>
    <property type="evidence" value="ECO:0007669"/>
    <property type="project" value="Ensembl"/>
</dbReference>
<dbReference type="GO" id="GO:0016525">
    <property type="term" value="P:negative regulation of angiogenesis"/>
    <property type="evidence" value="ECO:0007669"/>
    <property type="project" value="Ensembl"/>
</dbReference>
<dbReference type="GO" id="GO:1902951">
    <property type="term" value="P:negative regulation of dendritic spine maintenance"/>
    <property type="evidence" value="ECO:0007669"/>
    <property type="project" value="Ensembl"/>
</dbReference>
<dbReference type="GO" id="GO:0010629">
    <property type="term" value="P:negative regulation of gene expression"/>
    <property type="evidence" value="ECO:0007669"/>
    <property type="project" value="Ensembl"/>
</dbReference>
<dbReference type="GO" id="GO:0042177">
    <property type="term" value="P:negative regulation of protein catabolic process"/>
    <property type="evidence" value="ECO:0007669"/>
    <property type="project" value="Ensembl"/>
</dbReference>
<dbReference type="GO" id="GO:0031397">
    <property type="term" value="P:negative regulation of protein ubiquitination"/>
    <property type="evidence" value="ECO:0007669"/>
    <property type="project" value="Ensembl"/>
</dbReference>
<dbReference type="GO" id="GO:0001764">
    <property type="term" value="P:neuron migration"/>
    <property type="evidence" value="ECO:0007669"/>
    <property type="project" value="Ensembl"/>
</dbReference>
<dbReference type="GO" id="GO:0018108">
    <property type="term" value="P:peptidyl-tyrosine phosphorylation"/>
    <property type="evidence" value="ECO:0000250"/>
    <property type="project" value="UniProtKB"/>
</dbReference>
<dbReference type="GO" id="GO:0010976">
    <property type="term" value="P:positive regulation of neuron projection development"/>
    <property type="evidence" value="ECO:0007669"/>
    <property type="project" value="Ensembl"/>
</dbReference>
<dbReference type="GO" id="GO:1900182">
    <property type="term" value="P:positive regulation of protein localization to nucleus"/>
    <property type="evidence" value="ECO:0007669"/>
    <property type="project" value="Ensembl"/>
</dbReference>
<dbReference type="GO" id="GO:0090314">
    <property type="term" value="P:positive regulation of protein targeting to membrane"/>
    <property type="evidence" value="ECO:0007669"/>
    <property type="project" value="Ensembl"/>
</dbReference>
<dbReference type="GO" id="GO:0030163">
    <property type="term" value="P:protein catabolic process"/>
    <property type="evidence" value="ECO:0007669"/>
    <property type="project" value="Ensembl"/>
</dbReference>
<dbReference type="GO" id="GO:0016567">
    <property type="term" value="P:protein ubiquitination"/>
    <property type="evidence" value="ECO:0007669"/>
    <property type="project" value="Ensembl"/>
</dbReference>
<dbReference type="GO" id="GO:0038026">
    <property type="term" value="P:reelin-mediated signaling pathway"/>
    <property type="evidence" value="ECO:0000250"/>
    <property type="project" value="UniProtKB"/>
</dbReference>
<dbReference type="GO" id="GO:1905664">
    <property type="term" value="P:regulation of calcium ion import across plasma membrane"/>
    <property type="evidence" value="ECO:0007669"/>
    <property type="project" value="Ensembl"/>
</dbReference>
<dbReference type="GO" id="GO:0008360">
    <property type="term" value="P:regulation of cell shape"/>
    <property type="evidence" value="ECO:0007669"/>
    <property type="project" value="Ensembl"/>
</dbReference>
<dbReference type="GO" id="GO:1900449">
    <property type="term" value="P:regulation of glutamate receptor signaling pathway"/>
    <property type="evidence" value="ECO:0007669"/>
    <property type="project" value="Ensembl"/>
</dbReference>
<dbReference type="GO" id="GO:0045471">
    <property type="term" value="P:response to ethanol"/>
    <property type="evidence" value="ECO:0007669"/>
    <property type="project" value="Ensembl"/>
</dbReference>
<dbReference type="GO" id="GO:0050852">
    <property type="term" value="P:T cell receptor signaling pathway"/>
    <property type="evidence" value="ECO:0000318"/>
    <property type="project" value="GO_Central"/>
</dbReference>
<dbReference type="CDD" id="cd05070">
    <property type="entry name" value="PTKc_Fyn"/>
    <property type="match status" value="1"/>
</dbReference>
<dbReference type="CDD" id="cd10418">
    <property type="entry name" value="SH2_Src_Fyn_isoform_a_like"/>
    <property type="match status" value="1"/>
</dbReference>
<dbReference type="CDD" id="cd12006">
    <property type="entry name" value="SH3_Fyn_Yrk"/>
    <property type="match status" value="1"/>
</dbReference>
<dbReference type="FunFam" id="1.10.510.10:FF:000553">
    <property type="entry name" value="Tyrosine-protein kinase"/>
    <property type="match status" value="1"/>
</dbReference>
<dbReference type="FunFam" id="3.30.200.20:FF:000016">
    <property type="entry name" value="Tyrosine-protein kinase"/>
    <property type="match status" value="1"/>
</dbReference>
<dbReference type="FunFam" id="2.30.30.40:FF:000182">
    <property type="entry name" value="Tyrosine-protein kinase Fyn"/>
    <property type="match status" value="1"/>
</dbReference>
<dbReference type="FunFam" id="3.30.505.10:FF:000120">
    <property type="entry name" value="Tyrosine-protein kinase Fyn"/>
    <property type="match status" value="1"/>
</dbReference>
<dbReference type="Gene3D" id="3.30.200.20">
    <property type="entry name" value="Phosphorylase Kinase, domain 1"/>
    <property type="match status" value="1"/>
</dbReference>
<dbReference type="Gene3D" id="3.30.505.10">
    <property type="entry name" value="SH2 domain"/>
    <property type="match status" value="1"/>
</dbReference>
<dbReference type="Gene3D" id="2.30.30.40">
    <property type="entry name" value="SH3 Domains"/>
    <property type="match status" value="1"/>
</dbReference>
<dbReference type="Gene3D" id="1.10.510.10">
    <property type="entry name" value="Transferase(Phosphotransferase) domain 1"/>
    <property type="match status" value="1"/>
</dbReference>
<dbReference type="InterPro" id="IPR047924">
    <property type="entry name" value="Fyn/Yrk_SH2"/>
</dbReference>
<dbReference type="InterPro" id="IPR035750">
    <property type="entry name" value="Fyn/Yrk_SH3"/>
</dbReference>
<dbReference type="InterPro" id="IPR011009">
    <property type="entry name" value="Kinase-like_dom_sf"/>
</dbReference>
<dbReference type="InterPro" id="IPR050198">
    <property type="entry name" value="Non-receptor_tyrosine_kinases"/>
</dbReference>
<dbReference type="InterPro" id="IPR000719">
    <property type="entry name" value="Prot_kinase_dom"/>
</dbReference>
<dbReference type="InterPro" id="IPR017441">
    <property type="entry name" value="Protein_kinase_ATP_BS"/>
</dbReference>
<dbReference type="InterPro" id="IPR001245">
    <property type="entry name" value="Ser-Thr/Tyr_kinase_cat_dom"/>
</dbReference>
<dbReference type="InterPro" id="IPR000980">
    <property type="entry name" value="SH2"/>
</dbReference>
<dbReference type="InterPro" id="IPR036860">
    <property type="entry name" value="SH2_dom_sf"/>
</dbReference>
<dbReference type="InterPro" id="IPR036028">
    <property type="entry name" value="SH3-like_dom_sf"/>
</dbReference>
<dbReference type="InterPro" id="IPR001452">
    <property type="entry name" value="SH3_domain"/>
</dbReference>
<dbReference type="InterPro" id="IPR008266">
    <property type="entry name" value="Tyr_kinase_AS"/>
</dbReference>
<dbReference type="InterPro" id="IPR020635">
    <property type="entry name" value="Tyr_kinase_cat_dom"/>
</dbReference>
<dbReference type="PANTHER" id="PTHR24418">
    <property type="entry name" value="TYROSINE-PROTEIN KINASE"/>
    <property type="match status" value="1"/>
</dbReference>
<dbReference type="Pfam" id="PF07714">
    <property type="entry name" value="PK_Tyr_Ser-Thr"/>
    <property type="match status" value="1"/>
</dbReference>
<dbReference type="Pfam" id="PF00017">
    <property type="entry name" value="SH2"/>
    <property type="match status" value="1"/>
</dbReference>
<dbReference type="Pfam" id="PF00018">
    <property type="entry name" value="SH3_1"/>
    <property type="match status" value="1"/>
</dbReference>
<dbReference type="PRINTS" id="PR00401">
    <property type="entry name" value="SH2DOMAIN"/>
</dbReference>
<dbReference type="PRINTS" id="PR00452">
    <property type="entry name" value="SH3DOMAIN"/>
</dbReference>
<dbReference type="PRINTS" id="PR00109">
    <property type="entry name" value="TYRKINASE"/>
</dbReference>
<dbReference type="SMART" id="SM00252">
    <property type="entry name" value="SH2"/>
    <property type="match status" value="1"/>
</dbReference>
<dbReference type="SMART" id="SM00326">
    <property type="entry name" value="SH3"/>
    <property type="match status" value="1"/>
</dbReference>
<dbReference type="SMART" id="SM00219">
    <property type="entry name" value="TyrKc"/>
    <property type="match status" value="1"/>
</dbReference>
<dbReference type="SUPFAM" id="SSF56112">
    <property type="entry name" value="Protein kinase-like (PK-like)"/>
    <property type="match status" value="1"/>
</dbReference>
<dbReference type="SUPFAM" id="SSF55550">
    <property type="entry name" value="SH2 domain"/>
    <property type="match status" value="1"/>
</dbReference>
<dbReference type="SUPFAM" id="SSF50044">
    <property type="entry name" value="SH3-domain"/>
    <property type="match status" value="1"/>
</dbReference>
<dbReference type="PROSITE" id="PS00107">
    <property type="entry name" value="PROTEIN_KINASE_ATP"/>
    <property type="match status" value="1"/>
</dbReference>
<dbReference type="PROSITE" id="PS50011">
    <property type="entry name" value="PROTEIN_KINASE_DOM"/>
    <property type="match status" value="1"/>
</dbReference>
<dbReference type="PROSITE" id="PS00109">
    <property type="entry name" value="PROTEIN_KINASE_TYR"/>
    <property type="match status" value="1"/>
</dbReference>
<dbReference type="PROSITE" id="PS50001">
    <property type="entry name" value="SH2"/>
    <property type="match status" value="1"/>
</dbReference>
<dbReference type="PROSITE" id="PS50002">
    <property type="entry name" value="SH3"/>
    <property type="match status" value="1"/>
</dbReference>
<organism>
    <name type="scientific">Sus scrofa</name>
    <name type="common">Pig</name>
    <dbReference type="NCBI Taxonomy" id="9823"/>
    <lineage>
        <taxon>Eukaryota</taxon>
        <taxon>Metazoa</taxon>
        <taxon>Chordata</taxon>
        <taxon>Craniata</taxon>
        <taxon>Vertebrata</taxon>
        <taxon>Euteleostomi</taxon>
        <taxon>Mammalia</taxon>
        <taxon>Eutheria</taxon>
        <taxon>Laurasiatheria</taxon>
        <taxon>Artiodactyla</taxon>
        <taxon>Suina</taxon>
        <taxon>Suidae</taxon>
        <taxon>Sus</taxon>
    </lineage>
</organism>
<gene>
    <name evidence="10" type="primary">FYN</name>
</gene>
<keyword id="KW-1064">Adaptive immunity</keyword>
<keyword id="KW-0067">ATP-binding</keyword>
<keyword id="KW-1003">Cell membrane</keyword>
<keyword id="KW-0963">Cytoplasm</keyword>
<keyword id="KW-0217">Developmental protein</keyword>
<keyword id="KW-0391">Immunity</keyword>
<keyword id="KW-0418">Kinase</keyword>
<keyword id="KW-0449">Lipoprotein</keyword>
<keyword id="KW-0464">Manganese</keyword>
<keyword id="KW-0472">Membrane</keyword>
<keyword id="KW-0479">Metal-binding</keyword>
<keyword id="KW-0519">Myristate</keyword>
<keyword id="KW-0547">Nucleotide-binding</keyword>
<keyword id="KW-0539">Nucleus</keyword>
<keyword id="KW-0564">Palmitate</keyword>
<keyword id="KW-0597">Phosphoprotein</keyword>
<keyword id="KW-1185">Reference proteome</keyword>
<keyword id="KW-0727">SH2 domain</keyword>
<keyword id="KW-0728">SH3 domain</keyword>
<keyword id="KW-0808">Transferase</keyword>
<keyword id="KW-0829">Tyrosine-protein kinase</keyword>
<sequence length="537" mass="60689">MGCVQCKDKEATKLTEERDGSLNQSSGFRYGTDPTPQHYPSFGVTSIPNYNNFHAAGGQGLTVFGGVSSSSHTGTLRTRGGTGVTLFVALYDYEARTEDDLSFHKGEKFQILNSSEGDWWEARSLTTGETGYIPSNYVAPVDSIQAEEWYFGKLGRKDAERQLLSFGNPRGTFLIRESETTKGAYSLSIRDWDDMKGDHVKHYKIRKLDNGGYYITTRAQFETLQQLVQHYSERAAGLCCRLVVPCHKGMPRLTDLSVKTKDVWEIPRESLQLIKRLGNGQFGEVWMGTWNGNTKVAIKTLKPGTMSPESFLEEAQIMKKLKHDKLVQLYAVVSEEPIYIVTEYMNKGSLLDFLKDGEGRALKLPNLVDMAAQVAAGMAYIERMNYIHRDLRSANILVGNGLICKIADFGLARLIEDNEYTARQGAKFPIKWTAPEAALYGRFTIKSDVWSFGILLTELVTKGRVPYPGMNNREVLEQVERGYRMPCPQDCPISLHELMIHCWKKDPEERPTFEYLQGFLEDYFTATEPQYQPGENL</sequence>
<feature type="initiator methionine" description="Removed" evidence="2">
    <location>
        <position position="1"/>
    </location>
</feature>
<feature type="chain" id="PRO_0000282943" description="Tyrosine-protein kinase Fyn">
    <location>
        <begin position="2"/>
        <end position="537"/>
    </location>
</feature>
<feature type="domain" description="SH3" evidence="8">
    <location>
        <begin position="82"/>
        <end position="143"/>
    </location>
</feature>
<feature type="domain" description="SH2" evidence="7">
    <location>
        <begin position="149"/>
        <end position="246"/>
    </location>
</feature>
<feature type="domain" description="Protein kinase" evidence="6">
    <location>
        <begin position="271"/>
        <end position="524"/>
    </location>
</feature>
<feature type="active site" description="Proton acceptor" evidence="3 6 9">
    <location>
        <position position="390"/>
    </location>
</feature>
<feature type="binding site" evidence="3 6">
    <location>
        <begin position="277"/>
        <end position="285"/>
    </location>
    <ligand>
        <name>ATP</name>
        <dbReference type="ChEBI" id="CHEBI:30616"/>
    </ligand>
</feature>
<feature type="binding site" evidence="5 6">
    <location>
        <position position="299"/>
    </location>
    <ligand>
        <name>ATP</name>
        <dbReference type="ChEBI" id="CHEBI:30616"/>
    </ligand>
</feature>
<feature type="modified residue" description="Phosphothreonine; by PKC" evidence="2">
    <location>
        <position position="12"/>
    </location>
</feature>
<feature type="modified residue" description="Phosphoserine" evidence="2">
    <location>
        <position position="21"/>
    </location>
</feature>
<feature type="modified residue" description="Phosphoserine" evidence="2">
    <location>
        <position position="26"/>
    </location>
</feature>
<feature type="modified residue" description="Phosphotyrosine" evidence="4">
    <location>
        <position position="185"/>
    </location>
</feature>
<feature type="modified residue" description="Phosphotyrosine; by autocatalysis" evidence="4">
    <location>
        <position position="420"/>
    </location>
</feature>
<feature type="modified residue" description="Phosphotyrosine; by CSK" evidence="2">
    <location>
        <position position="531"/>
    </location>
</feature>
<feature type="lipid moiety-binding region" description="N-myristoyl glycine" evidence="4">
    <location>
        <position position="2"/>
    </location>
</feature>
<feature type="lipid moiety-binding region" description="S-palmitoyl cysteine" evidence="4">
    <location>
        <position position="3"/>
    </location>
</feature>
<feature type="lipid moiety-binding region" description="S-palmitoyl cysteine" evidence="4">
    <location>
        <position position="6"/>
    </location>
</feature>
<evidence type="ECO:0000250" key="1"/>
<evidence type="ECO:0000250" key="2">
    <source>
        <dbReference type="UniProtKB" id="P06241"/>
    </source>
</evidence>
<evidence type="ECO:0000250" key="3">
    <source>
        <dbReference type="UniProtKB" id="P28523"/>
    </source>
</evidence>
<evidence type="ECO:0000250" key="4">
    <source>
        <dbReference type="UniProtKB" id="P39688"/>
    </source>
</evidence>
<evidence type="ECO:0000250" key="5">
    <source>
        <dbReference type="UniProtKB" id="Q62844"/>
    </source>
</evidence>
<evidence type="ECO:0000255" key="6">
    <source>
        <dbReference type="PROSITE-ProRule" id="PRU00159"/>
    </source>
</evidence>
<evidence type="ECO:0000255" key="7">
    <source>
        <dbReference type="PROSITE-ProRule" id="PRU00191"/>
    </source>
</evidence>
<evidence type="ECO:0000255" key="8">
    <source>
        <dbReference type="PROSITE-ProRule" id="PRU00192"/>
    </source>
</evidence>
<evidence type="ECO:0000255" key="9">
    <source>
        <dbReference type="PROSITE-ProRule" id="PRU10028"/>
    </source>
</evidence>
<evidence type="ECO:0000312" key="10">
    <source>
        <dbReference type="EMBL" id="ABI33874.2"/>
    </source>
</evidence>
<accession>A1Y2K1</accession>